<accession>Q1C728</accession>
<feature type="chain" id="PRO_1000020556" description="Threonine--tRNA ligase">
    <location>
        <begin position="1"/>
        <end position="642"/>
    </location>
</feature>
<feature type="domain" description="TGS" evidence="2">
    <location>
        <begin position="1"/>
        <end position="61"/>
    </location>
</feature>
<feature type="region of interest" description="Catalytic" evidence="1">
    <location>
        <begin position="243"/>
        <end position="534"/>
    </location>
</feature>
<feature type="binding site" evidence="1">
    <location>
        <position position="334"/>
    </location>
    <ligand>
        <name>Zn(2+)</name>
        <dbReference type="ChEBI" id="CHEBI:29105"/>
    </ligand>
</feature>
<feature type="binding site" evidence="1">
    <location>
        <position position="385"/>
    </location>
    <ligand>
        <name>Zn(2+)</name>
        <dbReference type="ChEBI" id="CHEBI:29105"/>
    </ligand>
</feature>
<feature type="binding site" evidence="1">
    <location>
        <position position="511"/>
    </location>
    <ligand>
        <name>Zn(2+)</name>
        <dbReference type="ChEBI" id="CHEBI:29105"/>
    </ligand>
</feature>
<protein>
    <recommendedName>
        <fullName evidence="1">Threonine--tRNA ligase</fullName>
        <ecNumber evidence="1">6.1.1.3</ecNumber>
    </recommendedName>
    <alternativeName>
        <fullName evidence="1">Threonyl-tRNA synthetase</fullName>
        <shortName evidence="1">ThrRS</shortName>
    </alternativeName>
</protein>
<evidence type="ECO:0000255" key="1">
    <source>
        <dbReference type="HAMAP-Rule" id="MF_00184"/>
    </source>
</evidence>
<evidence type="ECO:0000255" key="2">
    <source>
        <dbReference type="PROSITE-ProRule" id="PRU01228"/>
    </source>
</evidence>
<dbReference type="EC" id="6.1.1.3" evidence="1"/>
<dbReference type="EMBL" id="CP000308">
    <property type="protein sequence ID" value="ABG13744.1"/>
    <property type="molecule type" value="Genomic_DNA"/>
</dbReference>
<dbReference type="RefSeq" id="WP_002211836.1">
    <property type="nucleotide sequence ID" value="NZ_CP009906.1"/>
</dbReference>
<dbReference type="SMR" id="Q1C728"/>
<dbReference type="GeneID" id="57976245"/>
<dbReference type="KEGG" id="ypa:YPA_1778"/>
<dbReference type="Proteomes" id="UP000001971">
    <property type="component" value="Chromosome"/>
</dbReference>
<dbReference type="GO" id="GO:0005829">
    <property type="term" value="C:cytosol"/>
    <property type="evidence" value="ECO:0007669"/>
    <property type="project" value="TreeGrafter"/>
</dbReference>
<dbReference type="GO" id="GO:0005524">
    <property type="term" value="F:ATP binding"/>
    <property type="evidence" value="ECO:0007669"/>
    <property type="project" value="UniProtKB-UniRule"/>
</dbReference>
<dbReference type="GO" id="GO:0046872">
    <property type="term" value="F:metal ion binding"/>
    <property type="evidence" value="ECO:0007669"/>
    <property type="project" value="UniProtKB-KW"/>
</dbReference>
<dbReference type="GO" id="GO:0004829">
    <property type="term" value="F:threonine-tRNA ligase activity"/>
    <property type="evidence" value="ECO:0007669"/>
    <property type="project" value="UniProtKB-UniRule"/>
</dbReference>
<dbReference type="GO" id="GO:0000049">
    <property type="term" value="F:tRNA binding"/>
    <property type="evidence" value="ECO:0007669"/>
    <property type="project" value="UniProtKB-KW"/>
</dbReference>
<dbReference type="GO" id="GO:0006435">
    <property type="term" value="P:threonyl-tRNA aminoacylation"/>
    <property type="evidence" value="ECO:0007669"/>
    <property type="project" value="UniProtKB-UniRule"/>
</dbReference>
<dbReference type="CDD" id="cd01667">
    <property type="entry name" value="TGS_ThrRS"/>
    <property type="match status" value="1"/>
</dbReference>
<dbReference type="CDD" id="cd00860">
    <property type="entry name" value="ThrRS_anticodon"/>
    <property type="match status" value="1"/>
</dbReference>
<dbReference type="CDD" id="cd00771">
    <property type="entry name" value="ThrRS_core"/>
    <property type="match status" value="1"/>
</dbReference>
<dbReference type="FunFam" id="3.10.20.30:FF:000005">
    <property type="entry name" value="Threonine--tRNA ligase"/>
    <property type="match status" value="1"/>
</dbReference>
<dbReference type="FunFam" id="3.30.54.20:FF:000002">
    <property type="entry name" value="Threonine--tRNA ligase"/>
    <property type="match status" value="1"/>
</dbReference>
<dbReference type="FunFam" id="3.30.930.10:FF:000002">
    <property type="entry name" value="Threonine--tRNA ligase"/>
    <property type="match status" value="1"/>
</dbReference>
<dbReference type="FunFam" id="3.40.50.800:FF:000001">
    <property type="entry name" value="Threonine--tRNA ligase"/>
    <property type="match status" value="1"/>
</dbReference>
<dbReference type="FunFam" id="3.30.980.10:FF:000005">
    <property type="entry name" value="Threonyl-tRNA synthetase, mitochondrial"/>
    <property type="match status" value="1"/>
</dbReference>
<dbReference type="Gene3D" id="3.10.20.30">
    <property type="match status" value="1"/>
</dbReference>
<dbReference type="Gene3D" id="3.30.54.20">
    <property type="match status" value="1"/>
</dbReference>
<dbReference type="Gene3D" id="3.40.50.800">
    <property type="entry name" value="Anticodon-binding domain"/>
    <property type="match status" value="1"/>
</dbReference>
<dbReference type="Gene3D" id="3.30.930.10">
    <property type="entry name" value="Bira Bifunctional Protein, Domain 2"/>
    <property type="match status" value="1"/>
</dbReference>
<dbReference type="Gene3D" id="3.30.980.10">
    <property type="entry name" value="Threonyl-trna Synthetase, Chain A, domain 2"/>
    <property type="match status" value="1"/>
</dbReference>
<dbReference type="HAMAP" id="MF_00184">
    <property type="entry name" value="Thr_tRNA_synth"/>
    <property type="match status" value="1"/>
</dbReference>
<dbReference type="InterPro" id="IPR002314">
    <property type="entry name" value="aa-tRNA-synt_IIb"/>
</dbReference>
<dbReference type="InterPro" id="IPR006195">
    <property type="entry name" value="aa-tRNA-synth_II"/>
</dbReference>
<dbReference type="InterPro" id="IPR045864">
    <property type="entry name" value="aa-tRNA-synth_II/BPL/LPL"/>
</dbReference>
<dbReference type="InterPro" id="IPR004154">
    <property type="entry name" value="Anticodon-bd"/>
</dbReference>
<dbReference type="InterPro" id="IPR036621">
    <property type="entry name" value="Anticodon-bd_dom_sf"/>
</dbReference>
<dbReference type="InterPro" id="IPR012675">
    <property type="entry name" value="Beta-grasp_dom_sf"/>
</dbReference>
<dbReference type="InterPro" id="IPR004095">
    <property type="entry name" value="TGS"/>
</dbReference>
<dbReference type="InterPro" id="IPR012676">
    <property type="entry name" value="TGS-like"/>
</dbReference>
<dbReference type="InterPro" id="IPR002320">
    <property type="entry name" value="Thr-tRNA-ligase_IIa"/>
</dbReference>
<dbReference type="InterPro" id="IPR018163">
    <property type="entry name" value="Thr/Ala-tRNA-synth_IIc_edit"/>
</dbReference>
<dbReference type="InterPro" id="IPR047246">
    <property type="entry name" value="ThrRS_anticodon"/>
</dbReference>
<dbReference type="InterPro" id="IPR033728">
    <property type="entry name" value="ThrRS_core"/>
</dbReference>
<dbReference type="InterPro" id="IPR012947">
    <property type="entry name" value="tRNA_SAD"/>
</dbReference>
<dbReference type="NCBIfam" id="TIGR00418">
    <property type="entry name" value="thrS"/>
    <property type="match status" value="1"/>
</dbReference>
<dbReference type="PANTHER" id="PTHR11451:SF44">
    <property type="entry name" value="THREONINE--TRNA LIGASE, CHLOROPLASTIC_MITOCHONDRIAL 2"/>
    <property type="match status" value="1"/>
</dbReference>
<dbReference type="PANTHER" id="PTHR11451">
    <property type="entry name" value="THREONINE-TRNA LIGASE"/>
    <property type="match status" value="1"/>
</dbReference>
<dbReference type="Pfam" id="PF03129">
    <property type="entry name" value="HGTP_anticodon"/>
    <property type="match status" value="1"/>
</dbReference>
<dbReference type="Pfam" id="PF02824">
    <property type="entry name" value="TGS"/>
    <property type="match status" value="1"/>
</dbReference>
<dbReference type="Pfam" id="PF00587">
    <property type="entry name" value="tRNA-synt_2b"/>
    <property type="match status" value="1"/>
</dbReference>
<dbReference type="Pfam" id="PF07973">
    <property type="entry name" value="tRNA_SAD"/>
    <property type="match status" value="1"/>
</dbReference>
<dbReference type="PRINTS" id="PR01047">
    <property type="entry name" value="TRNASYNTHTHR"/>
</dbReference>
<dbReference type="SMART" id="SM00863">
    <property type="entry name" value="tRNA_SAD"/>
    <property type="match status" value="1"/>
</dbReference>
<dbReference type="SUPFAM" id="SSF52954">
    <property type="entry name" value="Class II aaRS ABD-related"/>
    <property type="match status" value="1"/>
</dbReference>
<dbReference type="SUPFAM" id="SSF55681">
    <property type="entry name" value="Class II aaRS and biotin synthetases"/>
    <property type="match status" value="1"/>
</dbReference>
<dbReference type="SUPFAM" id="SSF81271">
    <property type="entry name" value="TGS-like"/>
    <property type="match status" value="1"/>
</dbReference>
<dbReference type="SUPFAM" id="SSF55186">
    <property type="entry name" value="ThrRS/AlaRS common domain"/>
    <property type="match status" value="1"/>
</dbReference>
<dbReference type="PROSITE" id="PS50862">
    <property type="entry name" value="AA_TRNA_LIGASE_II"/>
    <property type="match status" value="1"/>
</dbReference>
<dbReference type="PROSITE" id="PS51880">
    <property type="entry name" value="TGS"/>
    <property type="match status" value="1"/>
</dbReference>
<reference key="1">
    <citation type="journal article" date="2006" name="J. Bacteriol.">
        <title>Complete genome sequence of Yersinia pestis strains Antiqua and Nepal516: evidence of gene reduction in an emerging pathogen.</title>
        <authorList>
            <person name="Chain P.S.G."/>
            <person name="Hu P."/>
            <person name="Malfatti S.A."/>
            <person name="Radnedge L."/>
            <person name="Larimer F."/>
            <person name="Vergez L.M."/>
            <person name="Worsham P."/>
            <person name="Chu M.C."/>
            <person name="Andersen G.L."/>
        </authorList>
    </citation>
    <scope>NUCLEOTIDE SEQUENCE [LARGE SCALE GENOMIC DNA]</scope>
    <source>
        <strain>Antiqua</strain>
    </source>
</reference>
<keyword id="KW-0030">Aminoacyl-tRNA synthetase</keyword>
<keyword id="KW-0067">ATP-binding</keyword>
<keyword id="KW-0963">Cytoplasm</keyword>
<keyword id="KW-0436">Ligase</keyword>
<keyword id="KW-0479">Metal-binding</keyword>
<keyword id="KW-0547">Nucleotide-binding</keyword>
<keyword id="KW-0648">Protein biosynthesis</keyword>
<keyword id="KW-0694">RNA-binding</keyword>
<keyword id="KW-0820">tRNA-binding</keyword>
<keyword id="KW-0862">Zinc</keyword>
<name>SYT_YERPA</name>
<gene>
    <name evidence="1" type="primary">thrS</name>
    <name type="ordered locus">YPA_1778</name>
</gene>
<sequence length="642" mass="73655">MPVITLPDGSQRHYDHAVSVLDVALDIGPGLAKACIAGRVNGELVDASDLIESDAQLAIITAKDAEGLEILRHSCAHLLGHAIKQLWPDTKMAIGPVIDNGFYYDVDIEHTLTQEDLALLEKRMHELADKDYDVIKKKVSWQEARDTFAARGEDYKVAILDENISRDDRPGLYHHEEYVDMCRGPHVPNMRFCHHFKLQKTSGAYWRGDSKNKMLQRIYGTAWGDKKQLNAYLQRLEEAAKRDHRKIGKQLDLYHMQEEAPGMVFWHNDGWTIFRELETFVRMKLKEYQYQEVKGPFMMDRVLWEKTGHWENYAEHMFTTSSENREYCIKPMNCPGHVQIFNQGLKSYRDLPLRMAEFGSCHRNEPSGALHGLMRVRGFTQDDAHVFCTEEQVRDEVNSCIKMVYDMYSTFGFEKIVVKLSTRPEKRIGSDELWTRAEDDLAAALTENGIPFDYQPGEGAFYGPKIEFTLHDCLDRAWQCGTVQLDFSLPGRLSASYIGENNDRQVPVMIHRAILGSMERFIGILTEEYAGFFPTWLAPVQVVVMNITDSQSDYVQQVTKKLQDAGIRAKADLRNEKIGFKIREHTLRRVPYMLVCGDKEVESGKIAVRTRRGKDLGSLDVNVVVDQLLAEIRSRSLHQLEE</sequence>
<organism>
    <name type="scientific">Yersinia pestis bv. Antiqua (strain Antiqua)</name>
    <dbReference type="NCBI Taxonomy" id="360102"/>
    <lineage>
        <taxon>Bacteria</taxon>
        <taxon>Pseudomonadati</taxon>
        <taxon>Pseudomonadota</taxon>
        <taxon>Gammaproteobacteria</taxon>
        <taxon>Enterobacterales</taxon>
        <taxon>Yersiniaceae</taxon>
        <taxon>Yersinia</taxon>
    </lineage>
</organism>
<proteinExistence type="inferred from homology"/>
<comment type="function">
    <text evidence="1">Catalyzes the attachment of threonine to tRNA(Thr) in a two-step reaction: L-threonine is first activated by ATP to form Thr-AMP and then transferred to the acceptor end of tRNA(Thr). Also edits incorrectly charged L-seryl-tRNA(Thr).</text>
</comment>
<comment type="catalytic activity">
    <reaction evidence="1">
        <text>tRNA(Thr) + L-threonine + ATP = L-threonyl-tRNA(Thr) + AMP + diphosphate + H(+)</text>
        <dbReference type="Rhea" id="RHEA:24624"/>
        <dbReference type="Rhea" id="RHEA-COMP:9670"/>
        <dbReference type="Rhea" id="RHEA-COMP:9704"/>
        <dbReference type="ChEBI" id="CHEBI:15378"/>
        <dbReference type="ChEBI" id="CHEBI:30616"/>
        <dbReference type="ChEBI" id="CHEBI:33019"/>
        <dbReference type="ChEBI" id="CHEBI:57926"/>
        <dbReference type="ChEBI" id="CHEBI:78442"/>
        <dbReference type="ChEBI" id="CHEBI:78534"/>
        <dbReference type="ChEBI" id="CHEBI:456215"/>
        <dbReference type="EC" id="6.1.1.3"/>
    </reaction>
</comment>
<comment type="cofactor">
    <cofactor evidence="1">
        <name>Zn(2+)</name>
        <dbReference type="ChEBI" id="CHEBI:29105"/>
    </cofactor>
    <text evidence="1">Binds 1 zinc ion per subunit.</text>
</comment>
<comment type="subunit">
    <text evidence="1">Homodimer.</text>
</comment>
<comment type="subcellular location">
    <subcellularLocation>
        <location evidence="1">Cytoplasm</location>
    </subcellularLocation>
</comment>
<comment type="similarity">
    <text evidence="1">Belongs to the class-II aminoacyl-tRNA synthetase family.</text>
</comment>